<gene>
    <name type="primary">apl</name>
    <name type="ordered locus">LL0713</name>
    <name type="ORF">L119032</name>
</gene>
<comment type="subcellular location">
    <subcellularLocation>
        <location evidence="2">Cell membrane</location>
        <topology evidence="2">Multi-pass membrane protein</topology>
    </subcellularLocation>
</comment>
<comment type="similarity">
    <text evidence="2">Belongs to the DedA family.</text>
</comment>
<proteinExistence type="inferred from homology"/>
<dbReference type="EMBL" id="AE005176">
    <property type="protein sequence ID" value="AAK04811.1"/>
    <property type="molecule type" value="Genomic_DNA"/>
</dbReference>
<dbReference type="PIR" id="A86714">
    <property type="entry name" value="A86714"/>
</dbReference>
<dbReference type="RefSeq" id="NP_266869.1">
    <property type="nucleotide sequence ID" value="NC_002662.1"/>
</dbReference>
<dbReference type="RefSeq" id="WP_010905527.1">
    <property type="nucleotide sequence ID" value="NC_002662.1"/>
</dbReference>
<dbReference type="PaxDb" id="272623-L119032"/>
<dbReference type="DNASU" id="1114338"/>
<dbReference type="EnsemblBacteria" id="AAK04811">
    <property type="protein sequence ID" value="AAK04811"/>
    <property type="gene ID" value="L119032"/>
</dbReference>
<dbReference type="KEGG" id="lla:L119032"/>
<dbReference type="PATRIC" id="fig|272623.7.peg.766"/>
<dbReference type="eggNOG" id="COG0586">
    <property type="taxonomic scope" value="Bacteria"/>
</dbReference>
<dbReference type="HOGENOM" id="CLU_044208_1_1_9"/>
<dbReference type="OrthoDB" id="9813426at2"/>
<dbReference type="Proteomes" id="UP000002196">
    <property type="component" value="Chromosome"/>
</dbReference>
<dbReference type="GO" id="GO:0005886">
    <property type="term" value="C:plasma membrane"/>
    <property type="evidence" value="ECO:0007669"/>
    <property type="project" value="UniProtKB-SubCell"/>
</dbReference>
<dbReference type="InterPro" id="IPR051311">
    <property type="entry name" value="DedA_domain"/>
</dbReference>
<dbReference type="InterPro" id="IPR032816">
    <property type="entry name" value="VTT_dom"/>
</dbReference>
<dbReference type="PANTHER" id="PTHR42709">
    <property type="entry name" value="ALKALINE PHOSPHATASE LIKE PROTEIN"/>
    <property type="match status" value="1"/>
</dbReference>
<dbReference type="PANTHER" id="PTHR42709:SF6">
    <property type="entry name" value="UNDECAPRENYL PHOSPHATE TRANSPORTER A"/>
    <property type="match status" value="1"/>
</dbReference>
<dbReference type="Pfam" id="PF09335">
    <property type="entry name" value="VTT_dom"/>
    <property type="match status" value="1"/>
</dbReference>
<accession>Q9CHL6</accession>
<evidence type="ECO:0000255" key="1"/>
<evidence type="ECO:0000305" key="2"/>
<keyword id="KW-1003">Cell membrane</keyword>
<keyword id="KW-0472">Membrane</keyword>
<keyword id="KW-1185">Reference proteome</keyword>
<keyword id="KW-0812">Transmembrane</keyword>
<keyword id="KW-1133">Transmembrane helix</keyword>
<sequence>MQEIIIQVMNQFGYFGVAFLIMIENIFPPIPSEVILTFGGFMTTYSELGIIGMIIAATIGSVLGALILYFVGRLLSVERLEKLVSGRLGKVLRLKPEDITKAEKWFLKRGYATIFFCRFIPLIRSLISIPAGSAKMKLPSFLILTTLGTLIWNIVLVCLGAALGDNWEMIAGILDSYSSVVVVILGIIFILAILIFVKKRFFPKNKNYSSDTEK</sequence>
<organism>
    <name type="scientific">Lactococcus lactis subsp. lactis (strain IL1403)</name>
    <name type="common">Streptococcus lactis</name>
    <dbReference type="NCBI Taxonomy" id="272623"/>
    <lineage>
        <taxon>Bacteria</taxon>
        <taxon>Bacillati</taxon>
        <taxon>Bacillota</taxon>
        <taxon>Bacilli</taxon>
        <taxon>Lactobacillales</taxon>
        <taxon>Streptococcaceae</taxon>
        <taxon>Lactococcus</taxon>
    </lineage>
</organism>
<name>APL_LACLA</name>
<protein>
    <recommendedName>
        <fullName>Alkaline phosphatase-like protein</fullName>
    </recommendedName>
</protein>
<feature type="chain" id="PRO_0000161408" description="Alkaline phosphatase-like protein">
    <location>
        <begin position="1"/>
        <end position="214"/>
    </location>
</feature>
<feature type="transmembrane region" description="Helical" evidence="1">
    <location>
        <begin position="48"/>
        <end position="68"/>
    </location>
</feature>
<feature type="transmembrane region" description="Helical" evidence="1">
    <location>
        <begin position="141"/>
        <end position="161"/>
    </location>
</feature>
<feature type="transmembrane region" description="Helical" evidence="1">
    <location>
        <begin position="177"/>
        <end position="197"/>
    </location>
</feature>
<reference key="1">
    <citation type="journal article" date="2001" name="Genome Res.">
        <title>The complete genome sequence of the lactic acid bacterium Lactococcus lactis ssp. lactis IL1403.</title>
        <authorList>
            <person name="Bolotin A."/>
            <person name="Wincker P."/>
            <person name="Mauger S."/>
            <person name="Jaillon O."/>
            <person name="Malarme K."/>
            <person name="Weissenbach J."/>
            <person name="Ehrlich S.D."/>
            <person name="Sorokin A."/>
        </authorList>
    </citation>
    <scope>NUCLEOTIDE SEQUENCE [LARGE SCALE GENOMIC DNA]</scope>
    <source>
        <strain>IL1403</strain>
    </source>
</reference>